<comment type="function">
    <text evidence="3 6">Functions as a sorting receptor in the Golgi compartment and as a clearance receptor on the cell surface. Required for protein transport from the Golgi apparatus to the lysosomes by a pathway that is independent of the mannose-6-phosphate receptor (M6PR). Lysosomal proteins bind specifically to the receptor in the Golgi apparatus and the resulting receptor-ligand complex is transported to an acidic prelysosomal compartment where the low pH mediates the dissociation of the complex. The receptor is then recycled back to the Golgi for another round of trafficking through its binding to the retromer. Also required for protein transport from the Golgi apparatus to the endosomes. Promotes neuronal apoptosis by mediating endocytosis of the proapoptotic precursor forms of BDNF (proBDNF) and NGFB (proNGFB). Also acts as a receptor for neurotensin. May promote mineralization of the extracellular matrix during osteogenic differentiation by scavenging extracellular LPL. Probably required in adipocytes for the formation of specialized storage vesicles containing the glucose transporter SLC2A4/GLUT4 (GLUT4 storage vesicles, or GSVs). These vesicles provide a stable pool of SLC2A4 and confer increased responsiveness to insulin (By similarity). May also mediate transport from the endoplasmic reticulum to the Golgi (PubMed:12771154).</text>
</comment>
<comment type="subunit">
    <text evidence="2 3 7">Interacts with LPL and SLC2A4 (By similarity). Interacts with the cytosolic adapter proteins GGA1 and GGA2. Interacts with numerous ligands including the receptor-associated protein LRPAP1/RAP, GM2A and NTS. Forms a complex with NGFR which binds specifically to the precursor forms of NGFB (proNGFB) and BDNF (proBDNF) (PubMed:15987945). Interacts with the Trk receptors NTRK1, NTRK2 and NTRK3; may regulate their anterograde axonal transport and signaling. Interacts with CLN5. Interacts with PSAP. Interacts with GRN; this interaction mediates endocytosis and lysosome delivery of progranulin; interaction occurs at the neuronal cell surface in a stressed nervous system (By similarity). Interacts with the heterotrimeric retromer cargo-selective complex (CSC), also described as vacuolar protein sorting subcomplex (VPS), formed by VPS26 (VPS26A or VPS26B), VPS29 and VPS35; which is involved in retrograde trafficking of the receptor from endosomes to the Golgi apparatus (By similarity). Interacts with SMPD1; the interaction is required for SMPD1 targeting to lysosomes (By similarity).</text>
</comment>
<comment type="subcellular location">
    <subcellularLocation>
        <location evidence="3">Golgi apparatus</location>
        <location evidence="3">Golgi stack membrane</location>
        <topology evidence="3">Single-pass type I membrane protein</topology>
    </subcellularLocation>
    <subcellularLocation>
        <location evidence="3">Endosome membrane</location>
        <topology evidence="3">Single-pass type I membrane protein</topology>
    </subcellularLocation>
    <subcellularLocation>
        <location evidence="3">Endoplasmic reticulum membrane</location>
        <topology evidence="3">Single-pass type I membrane protein</topology>
    </subcellularLocation>
    <subcellularLocation>
        <location evidence="3">Nucleus membrane</location>
        <topology evidence="3">Single-pass type I membrane protein</topology>
    </subcellularLocation>
    <subcellularLocation>
        <location evidence="3">Cell membrane</location>
        <topology evidence="3">Single-pass type I membrane protein</topology>
        <orientation evidence="3">Extracellular side</orientation>
    </subcellularLocation>
    <subcellularLocation>
        <location evidence="3">Lysosome membrane</location>
        <topology evidence="3">Single-pass type I membrane protein</topology>
    </subcellularLocation>
    <text evidence="3">Localized to membranes of the endoplasmic reticulum, endosomes, Golgi stack, lysosomes and nucleus. A small fraction of the protein is also localized to the plasma membrane. May also be found in SLC2A4/GLUT4 storage vesicles (GSVs) in adipocytes. Localization to the plasma membrane in adipocytes may be enhanced by insulin.</text>
</comment>
<comment type="tissue specificity">
    <text evidence="5 9">Highly expressed in fat, brain, and lung. Expressed in neuronal bodies and dendrites of the piriform cortex and hippocampus. Also expressed in the islands of Calleja, medial and lateral septal nuclei, amygdaloid nuclei, thalamic nuclei, the supraoptic nucleus, the substantia nigra, the Purkinje layer of the cerebellar cortex and the cranial motor nerve nuclei of the brainstem.</text>
</comment>
<comment type="domain">
    <text evidence="1">The N-terminal propeptide may facilitate precursor transport within the Golgi stack. Intrachain binding of the N-terminal propeptide and the extracellular domain may also inhibit premature ligand binding (By similarity).</text>
</comment>
<comment type="domain">
    <text evidence="1">The extracellular domain may be shed following protease cleavage in some cell types.</text>
</comment>
<comment type="PTM">
    <text evidence="3">The N-terminal propeptide is cleaved by furin and possibly other homologous proteases.</text>
</comment>
<comment type="PTM">
    <text evidence="3">Phosphorylation at Ser-819 facilitates the interaction with GGA1.</text>
</comment>
<comment type="PTM">
    <text evidence="3">Palmitoylated. Undergoes cysteine S-palmitoylation which promotes the partitioning of the receptor into an endosomal membrane subdomain where it can interact with the retromer cargo-selective complex which mediates its retrograde trafficking to the Golgi apparatus.</text>
</comment>
<comment type="similarity">
    <text evidence="10">Belongs to the VPS10-related sortilin family. SORT1 subfamily.</text>
</comment>
<gene>
    <name evidence="11" type="primary">Sort1</name>
</gene>
<dbReference type="EMBL" id="AABR03012291">
    <property type="status" value="NOT_ANNOTATED_CDS"/>
    <property type="molecule type" value="Genomic_DNA"/>
</dbReference>
<dbReference type="EMBL" id="AABR03012896">
    <property type="status" value="NOT_ANNOTATED_CDS"/>
    <property type="molecule type" value="Genomic_DNA"/>
</dbReference>
<dbReference type="EMBL" id="AABR03017724">
    <property type="status" value="NOT_ANNOTATED_CDS"/>
    <property type="molecule type" value="Genomic_DNA"/>
</dbReference>
<dbReference type="EMBL" id="AABR03019134">
    <property type="status" value="NOT_ANNOTATED_CDS"/>
    <property type="molecule type" value="Genomic_DNA"/>
</dbReference>
<dbReference type="EMBL" id="AABR03020083">
    <property type="status" value="NOT_ANNOTATED_CDS"/>
    <property type="molecule type" value="Genomic_DNA"/>
</dbReference>
<dbReference type="EMBL" id="AF019109">
    <property type="protein sequence ID" value="AAC02932.1"/>
    <property type="molecule type" value="mRNA"/>
</dbReference>
<dbReference type="EMBL" id="AF023621">
    <property type="protein sequence ID" value="AAB81864.1"/>
    <property type="molecule type" value="mRNA"/>
</dbReference>
<dbReference type="RefSeq" id="NP_113955.1">
    <property type="nucleotide sequence ID" value="NM_031767.1"/>
</dbReference>
<dbReference type="SMR" id="O54861"/>
<dbReference type="FunCoup" id="O54861">
    <property type="interactions" value="848"/>
</dbReference>
<dbReference type="IntAct" id="O54861">
    <property type="interactions" value="4"/>
</dbReference>
<dbReference type="MINT" id="O54861"/>
<dbReference type="STRING" id="10116.ENSRNOP00000051102"/>
<dbReference type="GlyCosmos" id="O54861">
    <property type="glycosylation" value="6 sites, 3 glycans"/>
</dbReference>
<dbReference type="GlyGen" id="O54861">
    <property type="glycosylation" value="6 sites, 2 N-linked glycans (1 site)"/>
</dbReference>
<dbReference type="iPTMnet" id="O54861"/>
<dbReference type="PhosphoSitePlus" id="O54861"/>
<dbReference type="SwissPalm" id="O54861"/>
<dbReference type="PaxDb" id="10116-ENSRNOP00000051102"/>
<dbReference type="GeneID" id="83576"/>
<dbReference type="KEGG" id="rno:83576"/>
<dbReference type="UCSC" id="RGD:619999">
    <property type="organism name" value="rat"/>
</dbReference>
<dbReference type="AGR" id="RGD:619999"/>
<dbReference type="CTD" id="6272"/>
<dbReference type="RGD" id="619999">
    <property type="gene designation" value="Sort1"/>
</dbReference>
<dbReference type="VEuPathDB" id="HostDB:ENSRNOG00000031814"/>
<dbReference type="eggNOG" id="KOG3511">
    <property type="taxonomic scope" value="Eukaryota"/>
</dbReference>
<dbReference type="HOGENOM" id="CLU_013596_0_0_1"/>
<dbReference type="InParanoid" id="O54861"/>
<dbReference type="Reactome" id="R-RNO-432722">
    <property type="pathway name" value="Golgi Associated Vesicle Biogenesis"/>
</dbReference>
<dbReference type="PRO" id="PR:O54861"/>
<dbReference type="Proteomes" id="UP000002494">
    <property type="component" value="Chromosome 2"/>
</dbReference>
<dbReference type="Bgee" id="ENSRNOG00000031814">
    <property type="expression patterns" value="Expressed in frontal cortex and 19 other cell types or tissues"/>
</dbReference>
<dbReference type="GO" id="GO:0009986">
    <property type="term" value="C:cell surface"/>
    <property type="evidence" value="ECO:0000266"/>
    <property type="project" value="RGD"/>
</dbReference>
<dbReference type="GO" id="GO:0150053">
    <property type="term" value="C:cerebellar climbing fiber to Purkinje cell synapse"/>
    <property type="evidence" value="ECO:0000266"/>
    <property type="project" value="RGD"/>
</dbReference>
<dbReference type="GO" id="GO:0005905">
    <property type="term" value="C:clathrin-coated pit"/>
    <property type="evidence" value="ECO:0000266"/>
    <property type="project" value="RGD"/>
</dbReference>
<dbReference type="GO" id="GO:0030136">
    <property type="term" value="C:clathrin-coated vesicle"/>
    <property type="evidence" value="ECO:0000266"/>
    <property type="project" value="RGD"/>
</dbReference>
<dbReference type="GO" id="GO:0031410">
    <property type="term" value="C:cytoplasmic vesicle"/>
    <property type="evidence" value="ECO:0000266"/>
    <property type="project" value="RGD"/>
</dbReference>
<dbReference type="GO" id="GO:0030659">
    <property type="term" value="C:cytoplasmic vesicle membrane"/>
    <property type="evidence" value="ECO:0000266"/>
    <property type="project" value="RGD"/>
</dbReference>
<dbReference type="GO" id="GO:0005829">
    <property type="term" value="C:cytosol"/>
    <property type="evidence" value="ECO:0007669"/>
    <property type="project" value="GOC"/>
</dbReference>
<dbReference type="GO" id="GO:0030425">
    <property type="term" value="C:dendrite"/>
    <property type="evidence" value="ECO:0000314"/>
    <property type="project" value="RGD"/>
</dbReference>
<dbReference type="GO" id="GO:0005769">
    <property type="term" value="C:early endosome"/>
    <property type="evidence" value="ECO:0000266"/>
    <property type="project" value="RGD"/>
</dbReference>
<dbReference type="GO" id="GO:0005789">
    <property type="term" value="C:endoplasmic reticulum membrane"/>
    <property type="evidence" value="ECO:0007669"/>
    <property type="project" value="UniProtKB-SubCell"/>
</dbReference>
<dbReference type="GO" id="GO:0010008">
    <property type="term" value="C:endosome membrane"/>
    <property type="evidence" value="ECO:0000266"/>
    <property type="project" value="RGD"/>
</dbReference>
<dbReference type="GO" id="GO:0005794">
    <property type="term" value="C:Golgi apparatus"/>
    <property type="evidence" value="ECO:0000250"/>
    <property type="project" value="UniProtKB"/>
</dbReference>
<dbReference type="GO" id="GO:0032580">
    <property type="term" value="C:Golgi cisterna membrane"/>
    <property type="evidence" value="ECO:0007669"/>
    <property type="project" value="UniProtKB-SubCell"/>
</dbReference>
<dbReference type="GO" id="GO:0005765">
    <property type="term" value="C:lysosomal membrane"/>
    <property type="evidence" value="ECO:0007669"/>
    <property type="project" value="UniProtKB-SubCell"/>
</dbReference>
<dbReference type="GO" id="GO:0005764">
    <property type="term" value="C:lysosome"/>
    <property type="evidence" value="ECO:0000250"/>
    <property type="project" value="UniProtKB"/>
</dbReference>
<dbReference type="GO" id="GO:0016020">
    <property type="term" value="C:membrane"/>
    <property type="evidence" value="ECO:0000266"/>
    <property type="project" value="RGD"/>
</dbReference>
<dbReference type="GO" id="GO:0043025">
    <property type="term" value="C:neuronal cell body"/>
    <property type="evidence" value="ECO:0000314"/>
    <property type="project" value="RGD"/>
</dbReference>
<dbReference type="GO" id="GO:0031965">
    <property type="term" value="C:nuclear membrane"/>
    <property type="evidence" value="ECO:0007669"/>
    <property type="project" value="UniProtKB-SubCell"/>
</dbReference>
<dbReference type="GO" id="GO:0048471">
    <property type="term" value="C:perinuclear region of cytoplasm"/>
    <property type="evidence" value="ECO:0000266"/>
    <property type="project" value="RGD"/>
</dbReference>
<dbReference type="GO" id="GO:0005886">
    <property type="term" value="C:plasma membrane"/>
    <property type="evidence" value="ECO:0000266"/>
    <property type="project" value="RGD"/>
</dbReference>
<dbReference type="GO" id="GO:0030140">
    <property type="term" value="C:trans-Golgi network transport vesicle"/>
    <property type="evidence" value="ECO:0000266"/>
    <property type="project" value="RGD"/>
</dbReference>
<dbReference type="GO" id="GO:0019899">
    <property type="term" value="F:enzyme binding"/>
    <property type="evidence" value="ECO:0000266"/>
    <property type="project" value="RGD"/>
</dbReference>
<dbReference type="GO" id="GO:0016492">
    <property type="term" value="F:G protein-coupled neurotensin receptor activity"/>
    <property type="evidence" value="ECO:0000304"/>
    <property type="project" value="RGD"/>
</dbReference>
<dbReference type="GO" id="GO:0048406">
    <property type="term" value="F:nerve growth factor binding"/>
    <property type="evidence" value="ECO:0000266"/>
    <property type="project" value="RGD"/>
</dbReference>
<dbReference type="GO" id="GO:0010465">
    <property type="term" value="F:nerve growth factor receptor activity"/>
    <property type="evidence" value="ECO:0000266"/>
    <property type="project" value="RGD"/>
</dbReference>
<dbReference type="GO" id="GO:0030379">
    <property type="term" value="F:neurotensin receptor activity, non-G protein-coupled"/>
    <property type="evidence" value="ECO:0000266"/>
    <property type="project" value="RGD"/>
</dbReference>
<dbReference type="GO" id="GO:1905394">
    <property type="term" value="F:retromer complex binding"/>
    <property type="evidence" value="ECO:0000266"/>
    <property type="project" value="RGD"/>
</dbReference>
<dbReference type="GO" id="GO:0046323">
    <property type="term" value="P:D-glucose import"/>
    <property type="evidence" value="ECO:0000266"/>
    <property type="project" value="RGD"/>
</dbReference>
<dbReference type="GO" id="GO:0006897">
    <property type="term" value="P:endocytosis"/>
    <property type="evidence" value="ECO:0000250"/>
    <property type="project" value="UniProtKB"/>
</dbReference>
<dbReference type="GO" id="GO:0008333">
    <property type="term" value="P:endosome to lysosome transport"/>
    <property type="evidence" value="ECO:0000266"/>
    <property type="project" value="RGD"/>
</dbReference>
<dbReference type="GO" id="GO:0032509">
    <property type="term" value="P:endosome transport via multivesicular body sorting pathway"/>
    <property type="evidence" value="ECO:0000266"/>
    <property type="project" value="RGD"/>
</dbReference>
<dbReference type="GO" id="GO:0008625">
    <property type="term" value="P:extrinsic apoptotic signaling pathway via death domain receptors"/>
    <property type="evidence" value="ECO:0000266"/>
    <property type="project" value="RGD"/>
</dbReference>
<dbReference type="GO" id="GO:0007186">
    <property type="term" value="P:G protein-coupled receptor signaling pathway"/>
    <property type="evidence" value="ECO:0000266"/>
    <property type="project" value="RGD"/>
</dbReference>
<dbReference type="GO" id="GO:0006895">
    <property type="term" value="P:Golgi to endosome transport"/>
    <property type="evidence" value="ECO:0000266"/>
    <property type="project" value="RGD"/>
</dbReference>
<dbReference type="GO" id="GO:0090160">
    <property type="term" value="P:Golgi to lysosome transport"/>
    <property type="evidence" value="ECO:0000250"/>
    <property type="project" value="UniProtKB"/>
</dbReference>
<dbReference type="GO" id="GO:0006886">
    <property type="term" value="P:intracellular protein transport"/>
    <property type="evidence" value="ECO:0000303"/>
    <property type="project" value="RGD"/>
</dbReference>
<dbReference type="GO" id="GO:0099558">
    <property type="term" value="P:maintenance of synapse structure"/>
    <property type="evidence" value="ECO:0000266"/>
    <property type="project" value="RGD"/>
</dbReference>
<dbReference type="GO" id="GO:0014902">
    <property type="term" value="P:myotube differentiation"/>
    <property type="evidence" value="ECO:0000266"/>
    <property type="project" value="RGD"/>
</dbReference>
<dbReference type="GO" id="GO:0045599">
    <property type="term" value="P:negative regulation of fat cell differentiation"/>
    <property type="evidence" value="ECO:0000266"/>
    <property type="project" value="RGD"/>
</dbReference>
<dbReference type="GO" id="GO:0007218">
    <property type="term" value="P:neuropeptide signaling pathway"/>
    <property type="evidence" value="ECO:0000266"/>
    <property type="project" value="RGD"/>
</dbReference>
<dbReference type="GO" id="GO:0048011">
    <property type="term" value="P:neurotrophin TRK receptor signaling pathway"/>
    <property type="evidence" value="ECO:0000266"/>
    <property type="project" value="RGD"/>
</dbReference>
<dbReference type="GO" id="GO:0001503">
    <property type="term" value="P:ossification"/>
    <property type="evidence" value="ECO:0007669"/>
    <property type="project" value="UniProtKB-KW"/>
</dbReference>
<dbReference type="GO" id="GO:0048227">
    <property type="term" value="P:plasma membrane to endosome transport"/>
    <property type="evidence" value="ECO:0000266"/>
    <property type="project" value="RGD"/>
</dbReference>
<dbReference type="GO" id="GO:1904037">
    <property type="term" value="P:positive regulation of epithelial cell apoptotic process"/>
    <property type="evidence" value="ECO:0000315"/>
    <property type="project" value="RGD"/>
</dbReference>
<dbReference type="GO" id="GO:0006622">
    <property type="term" value="P:protein targeting to lysosome"/>
    <property type="evidence" value="ECO:0000266"/>
    <property type="project" value="RGD"/>
</dbReference>
<dbReference type="GO" id="GO:0010468">
    <property type="term" value="P:regulation of gene expression"/>
    <property type="evidence" value="ECO:0000266"/>
    <property type="project" value="RGD"/>
</dbReference>
<dbReference type="GO" id="GO:0032868">
    <property type="term" value="P:response to insulin"/>
    <property type="evidence" value="ECO:0000266"/>
    <property type="project" value="RGD"/>
</dbReference>
<dbReference type="GO" id="GO:0016050">
    <property type="term" value="P:vesicle organization"/>
    <property type="evidence" value="ECO:0000266"/>
    <property type="project" value="RGD"/>
</dbReference>
<dbReference type="FunFam" id="2.10.70.80:FF:000003">
    <property type="entry name" value="Sortilin"/>
    <property type="match status" value="1"/>
</dbReference>
<dbReference type="FunFam" id="2.130.10.10:FF:000802">
    <property type="entry name" value="Sortilin"/>
    <property type="match status" value="1"/>
</dbReference>
<dbReference type="FunFam" id="3.30.60.270:FF:000004">
    <property type="entry name" value="Sortilin"/>
    <property type="match status" value="1"/>
</dbReference>
<dbReference type="Gene3D" id="2.10.70.80">
    <property type="match status" value="1"/>
</dbReference>
<dbReference type="Gene3D" id="3.30.60.270">
    <property type="match status" value="1"/>
</dbReference>
<dbReference type="Gene3D" id="2.130.10.10">
    <property type="entry name" value="YVTN repeat-like/Quinoprotein amine dehydrogenase"/>
    <property type="match status" value="1"/>
</dbReference>
<dbReference type="InterPro" id="IPR031777">
    <property type="entry name" value="Sortilin_C"/>
</dbReference>
<dbReference type="InterPro" id="IPR031778">
    <property type="entry name" value="Sortilin_N"/>
</dbReference>
<dbReference type="InterPro" id="IPR006581">
    <property type="entry name" value="VPS10"/>
</dbReference>
<dbReference type="InterPro" id="IPR050310">
    <property type="entry name" value="VPS10-sortilin"/>
</dbReference>
<dbReference type="InterPro" id="IPR015943">
    <property type="entry name" value="WD40/YVTN_repeat-like_dom_sf"/>
</dbReference>
<dbReference type="PANTHER" id="PTHR12106:SF23">
    <property type="entry name" value="SORTILIN"/>
    <property type="match status" value="1"/>
</dbReference>
<dbReference type="PANTHER" id="PTHR12106">
    <property type="entry name" value="SORTILIN RELATED"/>
    <property type="match status" value="1"/>
</dbReference>
<dbReference type="Pfam" id="PF15902">
    <property type="entry name" value="Sortilin-Vps10"/>
    <property type="match status" value="1"/>
</dbReference>
<dbReference type="Pfam" id="PF15901">
    <property type="entry name" value="Sortilin_C"/>
    <property type="match status" value="1"/>
</dbReference>
<dbReference type="SMART" id="SM00602">
    <property type="entry name" value="VPS10"/>
    <property type="match status" value="1"/>
</dbReference>
<dbReference type="SUPFAM" id="SSF110296">
    <property type="entry name" value="Oligoxyloglucan reducing end-specific cellobiohydrolase"/>
    <property type="match status" value="2"/>
</dbReference>
<keyword id="KW-1003">Cell membrane</keyword>
<keyword id="KW-0165">Cleavage on pair of basic residues</keyword>
<keyword id="KW-0217">Developmental protein</keyword>
<keyword id="KW-0221">Differentiation</keyword>
<keyword id="KW-0903">Direct protein sequencing</keyword>
<keyword id="KW-1015">Disulfide bond</keyword>
<keyword id="KW-0254">Endocytosis</keyword>
<keyword id="KW-0256">Endoplasmic reticulum</keyword>
<keyword id="KW-0967">Endosome</keyword>
<keyword id="KW-0325">Glycoprotein</keyword>
<keyword id="KW-0333">Golgi apparatus</keyword>
<keyword id="KW-0449">Lipoprotein</keyword>
<keyword id="KW-0458">Lysosome</keyword>
<keyword id="KW-0472">Membrane</keyword>
<keyword id="KW-0539">Nucleus</keyword>
<keyword id="KW-0892">Osteogenesis</keyword>
<keyword id="KW-0564">Palmitate</keyword>
<keyword id="KW-0597">Phosphoprotein</keyword>
<keyword id="KW-0675">Receptor</keyword>
<keyword id="KW-1185">Reference proteome</keyword>
<keyword id="KW-0677">Repeat</keyword>
<keyword id="KW-0732">Signal</keyword>
<keyword id="KW-0812">Transmembrane</keyword>
<keyword id="KW-1133">Transmembrane helix</keyword>
<keyword id="KW-0813">Transport</keyword>
<sequence length="825" mass="91169">MERPRGAADGLLRWPLGLLLLLQLLPPAAVGQDRLDAPPPPAPPLLRWAGPVGVSWGLRAAAPGGPVPRAGRWRRGAPAEDQDCGRLPDFIAKLTNNTHQHVFDDLSGSVSLSWVGDSTGVILVLTTFQVPLVIVSFGQSKLYRSEDYGKNFKDITNLINNTFIRTEFGMAIGPENSGKVILTAEVSGGSRGGRVFRSSDFAKNFVQTDLPFHPLTQMMYSPQNSDYLLALSTENGLWVSKNFGEKWEEIHKAVCLAKWGPNNIIFFTTHVNGSCKADLGALELWRTSDLGKTFKTIGVKIYSFGLGGRFLFASVMADKDTTRRIHVSTDQGDTWSMAQLPSVGQEQFYSILAANDDMVFMHVDEPGDTGFGTIFTSDDRGIVYSKSLDRHLYTTTGGETDFTNVTSLRGVYITSTLSEDNSIQSMITFDQGGRWEHLQKPENSKCDATAKNKNECSLHIHASYSISQKLNVPMAPLSEPNAVGIVIAHGSVGDAISVMVPDVYISDDGGYSWAKMLEGPHYYTILDSGGIIVAIEHSNRPINVIKFSTDEGQCWQSYVFSQEPVYFTGLASEPGARSMNISIWGFTESFLTRQWVSYTIDFKDILERNCEENDYTTWLAHSTDPGDYKDGCILGYKEQFLRLRKSSVCQNGRDYVVAKQPSICPCSLEDFLCDFGYFRPENASECVEQPELKGHELEFCLYGKEEHLTTNGYRKIPGDRCQGGMNPAREVKDLKKKCTSNFLNPKKQNSKSSSVPIILAIVGLMLVTVVAGVLIVKKYVCGGRFLVHRYSVLQQHAEADGVEALDTASHAKSGYHDDSDEDLLE</sequence>
<name>SORT_RAT</name>
<proteinExistence type="evidence at protein level"/>
<feature type="signal peptide" evidence="8">
    <location>
        <begin position="1"/>
        <end position="31"/>
    </location>
</feature>
<feature type="propeptide" id="PRO_0000436378" description="Removed in mature form" evidence="8">
    <location>
        <begin position="32"/>
        <end position="73"/>
    </location>
</feature>
<feature type="chain" id="PRO_0000045158" description="Sortilin">
    <location>
        <begin position="74"/>
        <end position="825"/>
    </location>
</feature>
<feature type="topological domain" description="Extracellular" evidence="4">
    <location>
        <begin position="74"/>
        <end position="754"/>
    </location>
</feature>
<feature type="transmembrane region" description="Helical" evidence="4">
    <location>
        <begin position="755"/>
        <end position="775"/>
    </location>
</feature>
<feature type="topological domain" description="Cytoplasmic" evidence="4">
    <location>
        <begin position="776"/>
        <end position="825"/>
    </location>
</feature>
<feature type="repeat" description="BNR 1">
    <location>
        <begin position="143"/>
        <end position="154"/>
    </location>
</feature>
<feature type="repeat" description="BNR 2">
    <location>
        <begin position="196"/>
        <end position="207"/>
    </location>
</feature>
<feature type="repeat" description="BNR 3">
    <location>
        <begin position="238"/>
        <end position="249"/>
    </location>
</feature>
<feature type="repeat" description="BNR 4">
    <location>
        <begin position="285"/>
        <end position="296"/>
    </location>
</feature>
<feature type="repeat" description="BNR 5">
    <location>
        <begin position="326"/>
        <end position="337"/>
    </location>
</feature>
<feature type="repeat" description="BNR 6">
    <location>
        <begin position="375"/>
        <end position="386"/>
    </location>
</feature>
<feature type="repeat" description="BNR 7">
    <location>
        <begin position="426"/>
        <end position="437"/>
    </location>
</feature>
<feature type="repeat" description="BNR 8">
    <location>
        <begin position="504"/>
        <end position="515"/>
    </location>
</feature>
<feature type="repeat" description="BNR 9">
    <location>
        <begin position="546"/>
        <end position="557"/>
    </location>
</feature>
<feature type="region of interest" description="Intrachain binding of the propeptide and the extracellular domain" evidence="1">
    <location>
        <begin position="48"/>
        <end position="59"/>
    </location>
</feature>
<feature type="region of interest" description="Interactions with LRPAP1 and NGFB" evidence="1">
    <location>
        <begin position="610"/>
        <end position="754"/>
    </location>
</feature>
<feature type="region of interest" description="Golgi to endosome transport and interactions with GGA1 and GGA2" evidence="1">
    <location>
        <begin position="777"/>
        <end position="825"/>
    </location>
</feature>
<feature type="short sequence motif" description="Endocytosis signal" evidence="4">
    <location>
        <begin position="785"/>
        <end position="790"/>
    </location>
</feature>
<feature type="short sequence motif" description="DXXLL motif involved in the interaction with GGA1" evidence="3">
    <location>
        <begin position="820"/>
        <end position="824"/>
    </location>
</feature>
<feature type="modified residue" description="Phosphoserine" evidence="3">
    <location>
        <position position="809"/>
    </location>
</feature>
<feature type="modified residue" description="Phosphoserine" evidence="3">
    <location>
        <position position="813"/>
    </location>
</feature>
<feature type="modified residue" description="Phosphoserine" evidence="12">
    <location>
        <position position="819"/>
    </location>
</feature>
<feature type="lipid moiety-binding region" description="S-palmitoyl cysteine" evidence="3">
    <location>
        <position position="781"/>
    </location>
</feature>
<feature type="glycosylation site" description="N-linked (GlcNAc...) asparagine" evidence="4">
    <location>
        <position position="96"/>
    </location>
</feature>
<feature type="glycosylation site" description="N-linked (GlcNAc...) asparagine" evidence="4">
    <location>
        <position position="160"/>
    </location>
</feature>
<feature type="glycosylation site" description="N-linked (GlcNAc...) asparagine" evidence="4">
    <location>
        <position position="272"/>
    </location>
</feature>
<feature type="glycosylation site" description="N-linked (GlcNAc...) asparagine" evidence="13">
    <location>
        <position position="404"/>
    </location>
</feature>
<feature type="glycosylation site" description="N-linked (GlcNAc...) asparagine" evidence="4">
    <location>
        <position position="580"/>
    </location>
</feature>
<feature type="glycosylation site" description="N-linked (GlcNAc...) asparagine" evidence="4">
    <location>
        <position position="682"/>
    </location>
</feature>
<feature type="disulfide bond" evidence="1">
    <location>
        <begin position="84"/>
        <end position="554"/>
    </location>
</feature>
<feature type="disulfide bond" evidence="1">
    <location>
        <begin position="255"/>
        <end position="275"/>
    </location>
</feature>
<feature type="disulfide bond" evidence="1">
    <location>
        <begin position="446"/>
        <end position="456"/>
    </location>
</feature>
<feature type="disulfide bond" evidence="1">
    <location>
        <begin position="610"/>
        <end position="649"/>
    </location>
</feature>
<feature type="disulfide bond" evidence="1">
    <location>
        <begin position="632"/>
        <end position="664"/>
    </location>
</feature>
<feature type="disulfide bond" evidence="1">
    <location>
        <begin position="666"/>
        <end position="721"/>
    </location>
</feature>
<feature type="disulfide bond" evidence="1">
    <location>
        <begin position="673"/>
        <end position="686"/>
    </location>
</feature>
<feature type="disulfide bond" evidence="1">
    <location>
        <begin position="700"/>
        <end position="738"/>
    </location>
</feature>
<feature type="sequence conflict" description="In Ref. 2; AAC02932." evidence="10" ref="2">
    <original>I</original>
    <variation>V</variation>
    <location>
        <position position="91"/>
    </location>
</feature>
<feature type="sequence conflict" description="In Ref. 3; AAB81864." evidence="10" ref="3">
    <original>KA</original>
    <variation>T</variation>
    <location>
        <begin position="276"/>
        <end position="277"/>
    </location>
</feature>
<feature type="sequence conflict" description="In Ref. 3; AAB81864." evidence="10" ref="3">
    <original>G</original>
    <variation>R</variation>
    <location>
        <position position="433"/>
    </location>
</feature>
<feature type="sequence conflict" description="In Ref. 2; AAC02932." evidence="10" ref="2">
    <original>D</original>
    <variation>Y</variation>
    <location>
        <position position="507"/>
    </location>
</feature>
<feature type="sequence conflict" description="In Ref. 3; AA sequence." evidence="10" ref="3">
    <original>K</original>
    <variation>Q</variation>
    <location>
        <position position="659"/>
    </location>
</feature>
<accession>O54861</accession>
<accession>O35389</accession>
<organism>
    <name type="scientific">Rattus norvegicus</name>
    <name type="common">Rat</name>
    <dbReference type="NCBI Taxonomy" id="10116"/>
    <lineage>
        <taxon>Eukaryota</taxon>
        <taxon>Metazoa</taxon>
        <taxon>Chordata</taxon>
        <taxon>Craniata</taxon>
        <taxon>Vertebrata</taxon>
        <taxon>Euteleostomi</taxon>
        <taxon>Mammalia</taxon>
        <taxon>Eutheria</taxon>
        <taxon>Euarchontoglires</taxon>
        <taxon>Glires</taxon>
        <taxon>Rodentia</taxon>
        <taxon>Myomorpha</taxon>
        <taxon>Muroidea</taxon>
        <taxon>Muridae</taxon>
        <taxon>Murinae</taxon>
        <taxon>Rattus</taxon>
    </lineage>
</organism>
<protein>
    <recommendedName>
        <fullName evidence="10">Sortilin</fullName>
    </recommendedName>
    <alternativeName>
        <fullName>Glycoprotein 110</fullName>
        <shortName>Gp110</shortName>
    </alternativeName>
    <alternativeName>
        <fullName>Neurotensin receptor 3</fullName>
        <shortName>NTR3</shortName>
    </alternativeName>
</protein>
<evidence type="ECO:0000250" key="1"/>
<evidence type="ECO:0000250" key="2">
    <source>
        <dbReference type="UniProtKB" id="Q6PHU5"/>
    </source>
</evidence>
<evidence type="ECO:0000250" key="3">
    <source>
        <dbReference type="UniProtKB" id="Q99523"/>
    </source>
</evidence>
<evidence type="ECO:0000255" key="4"/>
<evidence type="ECO:0000269" key="5">
    <source>
    </source>
</evidence>
<evidence type="ECO:0000269" key="6">
    <source>
    </source>
</evidence>
<evidence type="ECO:0000269" key="7">
    <source>
    </source>
</evidence>
<evidence type="ECO:0000269" key="8">
    <source>
    </source>
</evidence>
<evidence type="ECO:0000269" key="9">
    <source>
    </source>
</evidence>
<evidence type="ECO:0000305" key="10"/>
<evidence type="ECO:0000312" key="11">
    <source>
        <dbReference type="RGD" id="619999"/>
    </source>
</evidence>
<evidence type="ECO:0007744" key="12">
    <source>
    </source>
</evidence>
<evidence type="ECO:0007744" key="13">
    <source>
    </source>
</evidence>
<reference key="1">
    <citation type="journal article" date="2004" name="Nature">
        <title>Genome sequence of the Brown Norway rat yields insights into mammalian evolution.</title>
        <authorList>
            <person name="Gibbs R.A."/>
            <person name="Weinstock G.M."/>
            <person name="Metzker M.L."/>
            <person name="Muzny D.M."/>
            <person name="Sodergren E.J."/>
            <person name="Scherer S."/>
            <person name="Scott G."/>
            <person name="Steffen D."/>
            <person name="Worley K.C."/>
            <person name="Burch P.E."/>
            <person name="Okwuonu G."/>
            <person name="Hines S."/>
            <person name="Lewis L."/>
            <person name="Deramo C."/>
            <person name="Delgado O."/>
            <person name="Dugan-Rocha S."/>
            <person name="Miner G."/>
            <person name="Morgan M."/>
            <person name="Hawes A."/>
            <person name="Gill R."/>
            <person name="Holt R.A."/>
            <person name="Adams M.D."/>
            <person name="Amanatides P.G."/>
            <person name="Baden-Tillson H."/>
            <person name="Barnstead M."/>
            <person name="Chin S."/>
            <person name="Evans C.A."/>
            <person name="Ferriera S."/>
            <person name="Fosler C."/>
            <person name="Glodek A."/>
            <person name="Gu Z."/>
            <person name="Jennings D."/>
            <person name="Kraft C.L."/>
            <person name="Nguyen T."/>
            <person name="Pfannkoch C.M."/>
            <person name="Sitter C."/>
            <person name="Sutton G.G."/>
            <person name="Venter J.C."/>
            <person name="Woodage T."/>
            <person name="Smith D."/>
            <person name="Lee H.-M."/>
            <person name="Gustafson E."/>
            <person name="Cahill P."/>
            <person name="Kana A."/>
            <person name="Doucette-Stamm L."/>
            <person name="Weinstock K."/>
            <person name="Fechtel K."/>
            <person name="Weiss R.B."/>
            <person name="Dunn D.M."/>
            <person name="Green E.D."/>
            <person name="Blakesley R.W."/>
            <person name="Bouffard G.G."/>
            <person name="De Jong P.J."/>
            <person name="Osoegawa K."/>
            <person name="Zhu B."/>
            <person name="Marra M."/>
            <person name="Schein J."/>
            <person name="Bosdet I."/>
            <person name="Fjell C."/>
            <person name="Jones S."/>
            <person name="Krzywinski M."/>
            <person name="Mathewson C."/>
            <person name="Siddiqui A."/>
            <person name="Wye N."/>
            <person name="McPherson J."/>
            <person name="Zhao S."/>
            <person name="Fraser C.M."/>
            <person name="Shetty J."/>
            <person name="Shatsman S."/>
            <person name="Geer K."/>
            <person name="Chen Y."/>
            <person name="Abramzon S."/>
            <person name="Nierman W.C."/>
            <person name="Havlak P.H."/>
            <person name="Chen R."/>
            <person name="Durbin K.J."/>
            <person name="Egan A."/>
            <person name="Ren Y."/>
            <person name="Song X.-Z."/>
            <person name="Li B."/>
            <person name="Liu Y."/>
            <person name="Qin X."/>
            <person name="Cawley S."/>
            <person name="Cooney A.J."/>
            <person name="D'Souza L.M."/>
            <person name="Martin K."/>
            <person name="Wu J.Q."/>
            <person name="Gonzalez-Garay M.L."/>
            <person name="Jackson A.R."/>
            <person name="Kalafus K.J."/>
            <person name="McLeod M.P."/>
            <person name="Milosavljevic A."/>
            <person name="Virk D."/>
            <person name="Volkov A."/>
            <person name="Wheeler D.A."/>
            <person name="Zhang Z."/>
            <person name="Bailey J.A."/>
            <person name="Eichler E.E."/>
            <person name="Tuzun E."/>
            <person name="Birney E."/>
            <person name="Mongin E."/>
            <person name="Ureta-Vidal A."/>
            <person name="Woodwark C."/>
            <person name="Zdobnov E."/>
            <person name="Bork P."/>
            <person name="Suyama M."/>
            <person name="Torrents D."/>
            <person name="Alexandersson M."/>
            <person name="Trask B.J."/>
            <person name="Young J.M."/>
            <person name="Huang H."/>
            <person name="Wang H."/>
            <person name="Xing H."/>
            <person name="Daniels S."/>
            <person name="Gietzen D."/>
            <person name="Schmidt J."/>
            <person name="Stevens K."/>
            <person name="Vitt U."/>
            <person name="Wingrove J."/>
            <person name="Camara F."/>
            <person name="Mar Alba M."/>
            <person name="Abril J.F."/>
            <person name="Guigo R."/>
            <person name="Smit A."/>
            <person name="Dubchak I."/>
            <person name="Rubin E.M."/>
            <person name="Couronne O."/>
            <person name="Poliakov A."/>
            <person name="Huebner N."/>
            <person name="Ganten D."/>
            <person name="Goesele C."/>
            <person name="Hummel O."/>
            <person name="Kreitler T."/>
            <person name="Lee Y.-A."/>
            <person name="Monti J."/>
            <person name="Schulz H."/>
            <person name="Zimdahl H."/>
            <person name="Himmelbauer H."/>
            <person name="Lehrach H."/>
            <person name="Jacob H.J."/>
            <person name="Bromberg S."/>
            <person name="Gullings-Handley J."/>
            <person name="Jensen-Seaman M.I."/>
            <person name="Kwitek A.E."/>
            <person name="Lazar J."/>
            <person name="Pasko D."/>
            <person name="Tonellato P.J."/>
            <person name="Twigger S."/>
            <person name="Ponting C.P."/>
            <person name="Duarte J.M."/>
            <person name="Rice S."/>
            <person name="Goodstadt L."/>
            <person name="Beatson S.A."/>
            <person name="Emes R.D."/>
            <person name="Winter E.E."/>
            <person name="Webber C."/>
            <person name="Brandt P."/>
            <person name="Nyakatura G."/>
            <person name="Adetobi M."/>
            <person name="Chiaromonte F."/>
            <person name="Elnitski L."/>
            <person name="Eswara P."/>
            <person name="Hardison R.C."/>
            <person name="Hou M."/>
            <person name="Kolbe D."/>
            <person name="Makova K."/>
            <person name="Miller W."/>
            <person name="Nekrutenko A."/>
            <person name="Riemer C."/>
            <person name="Schwartz S."/>
            <person name="Taylor J."/>
            <person name="Yang S."/>
            <person name="Zhang Y."/>
            <person name="Lindpaintner K."/>
            <person name="Andrews T.D."/>
            <person name="Caccamo M."/>
            <person name="Clamp M."/>
            <person name="Clarke L."/>
            <person name="Curwen V."/>
            <person name="Durbin R.M."/>
            <person name="Eyras E."/>
            <person name="Searle S.M."/>
            <person name="Cooper G.M."/>
            <person name="Batzoglou S."/>
            <person name="Brudno M."/>
            <person name="Sidow A."/>
            <person name="Stone E.A."/>
            <person name="Payseur B.A."/>
            <person name="Bourque G."/>
            <person name="Lopez-Otin C."/>
            <person name="Puente X.S."/>
            <person name="Chakrabarti K."/>
            <person name="Chatterji S."/>
            <person name="Dewey C."/>
            <person name="Pachter L."/>
            <person name="Bray N."/>
            <person name="Yap V.B."/>
            <person name="Caspi A."/>
            <person name="Tesler G."/>
            <person name="Pevzner P.A."/>
            <person name="Haussler D."/>
            <person name="Roskin K.M."/>
            <person name="Baertsch R."/>
            <person name="Clawson H."/>
            <person name="Furey T.S."/>
            <person name="Hinrichs A.S."/>
            <person name="Karolchik D."/>
            <person name="Kent W.J."/>
            <person name="Rosenbloom K.R."/>
            <person name="Trumbower H."/>
            <person name="Weirauch M."/>
            <person name="Cooper D.N."/>
            <person name="Stenson P.D."/>
            <person name="Ma B."/>
            <person name="Brent M."/>
            <person name="Arumugam M."/>
            <person name="Shteynberg D."/>
            <person name="Copley R.R."/>
            <person name="Taylor M.S."/>
            <person name="Riethman H."/>
            <person name="Mudunuri U."/>
            <person name="Peterson J."/>
            <person name="Guyer M."/>
            <person name="Felsenfeld A."/>
            <person name="Old S."/>
            <person name="Mockrin S."/>
            <person name="Collins F.S."/>
        </authorList>
    </citation>
    <scope>NUCLEOTIDE SEQUENCE [LARGE SCALE GENOMIC DNA]</scope>
    <source>
        <strain>Brown Norway</strain>
    </source>
</reference>
<reference key="2">
    <citation type="journal article" date="1998" name="J. Biol. Chem.">
        <title>Sortilin is the major 110-kDa protein in GLUT4 vesicles from adipocytes.</title>
        <authorList>
            <person name="Morris N.J."/>
            <person name="Ross S.A."/>
            <person name="Lane W.S."/>
            <person name="Moestrup S.K."/>
            <person name="Petersen C.M."/>
            <person name="Keller S.R."/>
            <person name="Lienhard G.E."/>
        </authorList>
    </citation>
    <scope>NUCLEOTIDE SEQUENCE [MRNA] OF 89-825</scope>
    <scope>PROTEIN SEQUENCE OF 78-93</scope>
    <scope>PARTIAL PROTEIN SEQUENCE</scope>
    <scope>SUBCELLULAR LOCATION</scope>
    <source>
        <strain>Sprague-Dawley</strain>
        <tissue>Adipocyte</tissue>
    </source>
</reference>
<reference key="3">
    <citation type="journal article" date="1997" name="J. Biol. Chem.">
        <title>Sortilin is a major protein component of Glut4-containing vesicles.</title>
        <authorList>
            <person name="Lin B.-Z."/>
            <person name="Pilch P.F."/>
            <person name="Kandror K.V."/>
        </authorList>
    </citation>
    <scope>NUCLEOTIDE SEQUENCE [MRNA] OF 121-745</scope>
    <scope>PARTIAL PROTEIN SEQUENCE</scope>
    <scope>SUBCELLULAR LOCATION</scope>
    <scope>TISSUE SPECIFICITY</scope>
    <source>
        <strain>Sprague-Dawley</strain>
        <tissue>Skeletal muscle</tissue>
    </source>
</reference>
<reference key="4">
    <citation type="journal article" date="2003" name="J. Biol. Chem.">
        <title>The prodomain of a secreted hydrophobic mini-protein facilitates its export from the endoplasmic reticulum by hitchhiking on sorting receptors.</title>
        <authorList>
            <person name="Conticello S.G."/>
            <person name="Kowalsman N.D."/>
            <person name="Jacobsen C."/>
            <person name="Yudkovsky G."/>
            <person name="Sato K."/>
            <person name="Elazar Z."/>
            <person name="Petersen C.M."/>
            <person name="Aronheim A."/>
            <person name="Fainzilber M."/>
        </authorList>
    </citation>
    <scope>FUNCTION</scope>
</reference>
<reference key="5">
    <citation type="journal article" date="2003" name="J. Comp. Neurol.">
        <title>Distribution of NTS3 receptor/sortilin mRNA and protein in the rat central nervous system.</title>
        <authorList>
            <person name="Sarret P."/>
            <person name="Krzywkowski P."/>
            <person name="Segal L."/>
            <person name="Nielsen M.S."/>
            <person name="Petersen C.M."/>
            <person name="Mazella J."/>
            <person name="Stroh T."/>
            <person name="Beaudet A."/>
        </authorList>
    </citation>
    <scope>SUBCELLULAR LOCATION</scope>
    <scope>TISSUE SPECIFICITY</scope>
</reference>
<reference key="6">
    <citation type="journal article" date="2005" name="J. Neurosci.">
        <title>Sortilin controls intracellular sorting of brain-derived neurotrophic factor to the regulated secretory pathway.</title>
        <authorList>
            <person name="Chen Z.-Y."/>
            <person name="Ieraci A."/>
            <person name="Teng H."/>
            <person name="Dall H."/>
            <person name="Meng C.-X."/>
            <person name="Herrera D.G."/>
            <person name="Nykjaer A."/>
            <person name="Hempstead B.L."/>
            <person name="Lee F.S."/>
        </authorList>
    </citation>
    <scope>INTERACTION WITH BDNF</scope>
</reference>
<reference key="7">
    <citation type="journal article" date="2012" name="Nat. Commun.">
        <title>Quantitative maps of protein phosphorylation sites across 14 different rat organs and tissues.</title>
        <authorList>
            <person name="Lundby A."/>
            <person name="Secher A."/>
            <person name="Lage K."/>
            <person name="Nordsborg N.B."/>
            <person name="Dmytriyev A."/>
            <person name="Lundby C."/>
            <person name="Olsen J.V."/>
        </authorList>
    </citation>
    <scope>PHOSPHORYLATION [LARGE SCALE ANALYSIS] AT SER-819</scope>
    <scope>IDENTIFICATION BY MASS SPECTROMETRY [LARGE SCALE ANALYSIS]</scope>
</reference>
<reference key="8">
    <citation type="journal article" date="2013" name="J. Proteome Res.">
        <title>Site-specific glycan-peptide analysis for determination of N-glycoproteome heterogeneity.</title>
        <authorList>
            <person name="Parker B.L."/>
            <person name="Thaysen-Andersen M."/>
            <person name="Solis N."/>
            <person name="Scott N.E."/>
            <person name="Larsen M.R."/>
            <person name="Graham M.E."/>
            <person name="Packer N.H."/>
            <person name="Cordwell S.J."/>
        </authorList>
    </citation>
    <scope>GLYCOSYLATION [LARGE SCALE ANALYSIS] AT ASN-404</scope>
    <scope>IDENTIFICATION BY MASS SPECTROMETRY [LARGE SCALE ANALYSIS]</scope>
    <source>
        <tissue>Brain</tissue>
    </source>
</reference>
<reference key="9">
    <citation type="journal article" date="2015" name="J. Proteome Res.">
        <title>Peptidomics for studying limited proteolysis.</title>
        <authorList>
            <person name="Tsuchiya T."/>
            <person name="Osaki T."/>
            <person name="Minamino N."/>
            <person name="Sasaki K."/>
        </authorList>
    </citation>
    <scope>CLEAVAGE OF SIGNAL PEPTIDE AFTER GLY-31</scope>
    <scope>CLEAVAGE OF PROPEPTIDE AFTER TRP-73</scope>
    <scope>IDENTIFICATION BY MASS SPECTROMETRY</scope>
</reference>